<evidence type="ECO:0000255" key="1">
    <source>
        <dbReference type="HAMAP-Rule" id="MF_00271"/>
    </source>
</evidence>
<keyword id="KW-0066">ATP synthesis</keyword>
<keyword id="KW-0375">Hydrogen ion transport</keyword>
<keyword id="KW-0406">Ion transport</keyword>
<keyword id="KW-1185">Reference proteome</keyword>
<keyword id="KW-0813">Transport</keyword>
<sequence length="211" mass="24397">MARLNVNPTRMELSRLKKQLTTATRGHKLLKDKQDELMRRFIALVKENNELRIQVEQEVTDALSNFVLANATLNEAFIEELVAIPAEKVELEIIEQNILSVPVPKMIFDYDESVQEAPLDYGYVNSNSELDQAFAKISSILPKLLALANVEKTCQLLSKEIEKTRRRVNALEYMTIPQLEETIYYIQMKLEENERGEITRLIKIKSMNKEN</sequence>
<proteinExistence type="inferred from homology"/>
<gene>
    <name evidence="1" type="primary">atpD</name>
    <name type="ordered locus">EF_1500</name>
</gene>
<name>VATD_ENTFA</name>
<comment type="function">
    <text evidence="1">Produces ATP from ADP in the presence of a proton gradient across the membrane.</text>
</comment>
<comment type="similarity">
    <text evidence="1">Belongs to the V-ATPase D subunit family.</text>
</comment>
<feature type="chain" id="PRO_1000059157" description="V-type ATP synthase subunit D">
    <location>
        <begin position="1"/>
        <end position="211"/>
    </location>
</feature>
<protein>
    <recommendedName>
        <fullName evidence="1">V-type ATP synthase subunit D</fullName>
    </recommendedName>
    <alternativeName>
        <fullName evidence="1">V-ATPase subunit D</fullName>
    </alternativeName>
</protein>
<accession>Q834X7</accession>
<dbReference type="EMBL" id="AE016830">
    <property type="protein sequence ID" value="AAO81291.1"/>
    <property type="molecule type" value="Genomic_DNA"/>
</dbReference>
<dbReference type="RefSeq" id="NP_815221.1">
    <property type="nucleotide sequence ID" value="NC_004668.1"/>
</dbReference>
<dbReference type="RefSeq" id="WP_002357673.1">
    <property type="nucleotide sequence ID" value="NZ_KE136528.1"/>
</dbReference>
<dbReference type="SMR" id="Q834X7"/>
<dbReference type="STRING" id="226185.EF_1500"/>
<dbReference type="DNASU" id="1200403"/>
<dbReference type="EnsemblBacteria" id="AAO81291">
    <property type="protein sequence ID" value="AAO81291"/>
    <property type="gene ID" value="EF_1500"/>
</dbReference>
<dbReference type="KEGG" id="efa:EF1500"/>
<dbReference type="PATRIC" id="fig|226185.45.peg.2000"/>
<dbReference type="eggNOG" id="COG1394">
    <property type="taxonomic scope" value="Bacteria"/>
</dbReference>
<dbReference type="HOGENOM" id="CLU_069688_2_1_9"/>
<dbReference type="Proteomes" id="UP000001415">
    <property type="component" value="Chromosome"/>
</dbReference>
<dbReference type="GO" id="GO:0005524">
    <property type="term" value="F:ATP binding"/>
    <property type="evidence" value="ECO:0007669"/>
    <property type="project" value="UniProtKB-UniRule"/>
</dbReference>
<dbReference type="GO" id="GO:0046933">
    <property type="term" value="F:proton-transporting ATP synthase activity, rotational mechanism"/>
    <property type="evidence" value="ECO:0007669"/>
    <property type="project" value="UniProtKB-UniRule"/>
</dbReference>
<dbReference type="GO" id="GO:0046961">
    <property type="term" value="F:proton-transporting ATPase activity, rotational mechanism"/>
    <property type="evidence" value="ECO:0007669"/>
    <property type="project" value="InterPro"/>
</dbReference>
<dbReference type="GO" id="GO:0042777">
    <property type="term" value="P:proton motive force-driven plasma membrane ATP synthesis"/>
    <property type="evidence" value="ECO:0007669"/>
    <property type="project" value="UniProtKB-UniRule"/>
</dbReference>
<dbReference type="FunFam" id="1.10.287.3240:FF:000007">
    <property type="entry name" value="V-type ATP synthase subunit D"/>
    <property type="match status" value="1"/>
</dbReference>
<dbReference type="Gene3D" id="1.10.287.3240">
    <property type="match status" value="1"/>
</dbReference>
<dbReference type="HAMAP" id="MF_00271">
    <property type="entry name" value="ATP_synth_D_arch"/>
    <property type="match status" value="1"/>
</dbReference>
<dbReference type="InterPro" id="IPR002699">
    <property type="entry name" value="V_ATPase_D"/>
</dbReference>
<dbReference type="NCBIfam" id="NF001543">
    <property type="entry name" value="PRK00373.1-2"/>
    <property type="match status" value="1"/>
</dbReference>
<dbReference type="NCBIfam" id="TIGR00309">
    <property type="entry name" value="V_ATPase_subD"/>
    <property type="match status" value="1"/>
</dbReference>
<dbReference type="PANTHER" id="PTHR11671">
    <property type="entry name" value="V-TYPE ATP SYNTHASE SUBUNIT D"/>
    <property type="match status" value="1"/>
</dbReference>
<dbReference type="Pfam" id="PF01813">
    <property type="entry name" value="ATP-synt_D"/>
    <property type="match status" value="1"/>
</dbReference>
<organism>
    <name type="scientific">Enterococcus faecalis (strain ATCC 700802 / V583)</name>
    <dbReference type="NCBI Taxonomy" id="226185"/>
    <lineage>
        <taxon>Bacteria</taxon>
        <taxon>Bacillati</taxon>
        <taxon>Bacillota</taxon>
        <taxon>Bacilli</taxon>
        <taxon>Lactobacillales</taxon>
        <taxon>Enterococcaceae</taxon>
        <taxon>Enterococcus</taxon>
    </lineage>
</organism>
<reference key="1">
    <citation type="journal article" date="2003" name="Science">
        <title>Role of mobile DNA in the evolution of vancomycin-resistant Enterococcus faecalis.</title>
        <authorList>
            <person name="Paulsen I.T."/>
            <person name="Banerjei L."/>
            <person name="Myers G.S.A."/>
            <person name="Nelson K.E."/>
            <person name="Seshadri R."/>
            <person name="Read T.D."/>
            <person name="Fouts D.E."/>
            <person name="Eisen J.A."/>
            <person name="Gill S.R."/>
            <person name="Heidelberg J.F."/>
            <person name="Tettelin H."/>
            <person name="Dodson R.J."/>
            <person name="Umayam L.A."/>
            <person name="Brinkac L.M."/>
            <person name="Beanan M.J."/>
            <person name="Daugherty S.C."/>
            <person name="DeBoy R.T."/>
            <person name="Durkin S.A."/>
            <person name="Kolonay J.F."/>
            <person name="Madupu R."/>
            <person name="Nelson W.C."/>
            <person name="Vamathevan J.J."/>
            <person name="Tran B."/>
            <person name="Upton J."/>
            <person name="Hansen T."/>
            <person name="Shetty J."/>
            <person name="Khouri H.M."/>
            <person name="Utterback T.R."/>
            <person name="Radune D."/>
            <person name="Ketchum K.A."/>
            <person name="Dougherty B.A."/>
            <person name="Fraser C.M."/>
        </authorList>
    </citation>
    <scope>NUCLEOTIDE SEQUENCE [LARGE SCALE GENOMIC DNA]</scope>
    <source>
        <strain>ATCC 700802 / V583</strain>
    </source>
</reference>